<feature type="chain" id="PRO_1000081361" description="Malate dehydrogenase">
    <location>
        <begin position="1"/>
        <end position="319"/>
    </location>
</feature>
<feature type="active site" description="Proton acceptor" evidence="1">
    <location>
        <position position="176"/>
    </location>
</feature>
<feature type="binding site" evidence="1">
    <location>
        <begin position="10"/>
        <end position="15"/>
    </location>
    <ligand>
        <name>NAD(+)</name>
        <dbReference type="ChEBI" id="CHEBI:57540"/>
    </ligand>
</feature>
<feature type="binding site" evidence="1">
    <location>
        <position position="34"/>
    </location>
    <ligand>
        <name>NAD(+)</name>
        <dbReference type="ChEBI" id="CHEBI:57540"/>
    </ligand>
</feature>
<feature type="binding site" evidence="1">
    <location>
        <position position="83"/>
    </location>
    <ligand>
        <name>substrate</name>
    </ligand>
</feature>
<feature type="binding site" evidence="1">
    <location>
        <position position="89"/>
    </location>
    <ligand>
        <name>substrate</name>
    </ligand>
</feature>
<feature type="binding site" evidence="1">
    <location>
        <position position="96"/>
    </location>
    <ligand>
        <name>NAD(+)</name>
        <dbReference type="ChEBI" id="CHEBI:57540"/>
    </ligand>
</feature>
<feature type="binding site" evidence="1">
    <location>
        <begin position="119"/>
        <end position="121"/>
    </location>
    <ligand>
        <name>NAD(+)</name>
        <dbReference type="ChEBI" id="CHEBI:57540"/>
    </ligand>
</feature>
<feature type="binding site" evidence="1">
    <location>
        <position position="121"/>
    </location>
    <ligand>
        <name>substrate</name>
    </ligand>
</feature>
<feature type="binding site" evidence="1">
    <location>
        <position position="152"/>
    </location>
    <ligand>
        <name>substrate</name>
    </ligand>
</feature>
<evidence type="ECO:0000255" key="1">
    <source>
        <dbReference type="HAMAP-Rule" id="MF_00487"/>
    </source>
</evidence>
<organism>
    <name type="scientific">Francisella philomiragia subsp. philomiragia (strain ATCC 25017 / CCUG 19701 / FSC 153 / O#319-036)</name>
    <dbReference type="NCBI Taxonomy" id="484022"/>
    <lineage>
        <taxon>Bacteria</taxon>
        <taxon>Pseudomonadati</taxon>
        <taxon>Pseudomonadota</taxon>
        <taxon>Gammaproteobacteria</taxon>
        <taxon>Thiotrichales</taxon>
        <taxon>Francisellaceae</taxon>
        <taxon>Francisella</taxon>
    </lineage>
</organism>
<keyword id="KW-0520">NAD</keyword>
<keyword id="KW-0560">Oxidoreductase</keyword>
<keyword id="KW-0816">Tricarboxylic acid cycle</keyword>
<accession>B0TZT2</accession>
<protein>
    <recommendedName>
        <fullName evidence="1">Malate dehydrogenase</fullName>
        <ecNumber evidence="1">1.1.1.37</ecNumber>
    </recommendedName>
</protein>
<reference key="1">
    <citation type="submission" date="2007-12" db="EMBL/GenBank/DDBJ databases">
        <title>Complete sequence of chromosome of Francisella philomiragia subsp. philomiragia ATCC 25017.</title>
        <authorList>
            <consortium name="US DOE Joint Genome Institute"/>
            <person name="Copeland A."/>
            <person name="Lucas S."/>
            <person name="Lapidus A."/>
            <person name="Barry K."/>
            <person name="Detter J.C."/>
            <person name="Glavina del Rio T."/>
            <person name="Hammon N."/>
            <person name="Israni S."/>
            <person name="Dalin E."/>
            <person name="Tice H."/>
            <person name="Pitluck S."/>
            <person name="Chain P."/>
            <person name="Malfatti S."/>
            <person name="Shin M."/>
            <person name="Vergez L."/>
            <person name="Schmutz J."/>
            <person name="Larimer F."/>
            <person name="Land M."/>
            <person name="Hauser L."/>
            <person name="Richardson P."/>
        </authorList>
    </citation>
    <scope>NUCLEOTIDE SEQUENCE [LARGE SCALE GENOMIC DNA]</scope>
    <source>
        <strain>ATCC 25017 / CCUG 19701 / FSC 153 / O#319-036</strain>
    </source>
</reference>
<proteinExistence type="inferred from homology"/>
<sequence>MARKKIALIGAGNIGGTLAHLSLIKQLGDVVLFDIAPGMPQGKALDLLQSCPIEGVDFKVRGTNDYKDLEHSDVVIVTAGVPRKPGMSRDDLLGINIKVMQAVGEGIKHNCPDAFVICITNPLDIMVNMLQKFSGVPDNKIVGMAGVLDSARFRTFLADELNVSVQQVQAYVMGGHGDTMVPLTKMSNVAGVSLEQLVKEGKISQERLDSIVARTRNGGGEIVALLKTGSAYYAPAAAGIQMAESYLRDKKMILPCAAKIKAGMYGVDEDLFVGVPTEISANGVRPIHVEISEKEKEQLQVSINAVKELNKAAAEILAN</sequence>
<dbReference type="EC" id="1.1.1.37" evidence="1"/>
<dbReference type="EMBL" id="CP000937">
    <property type="protein sequence ID" value="ABZ87844.1"/>
    <property type="molecule type" value="Genomic_DNA"/>
</dbReference>
<dbReference type="SMR" id="B0TZT2"/>
<dbReference type="KEGG" id="fph:Fphi_1620"/>
<dbReference type="eggNOG" id="COG0039">
    <property type="taxonomic scope" value="Bacteria"/>
</dbReference>
<dbReference type="HOGENOM" id="CLU_045401_2_1_6"/>
<dbReference type="GO" id="GO:0004459">
    <property type="term" value="F:L-lactate dehydrogenase activity"/>
    <property type="evidence" value="ECO:0007669"/>
    <property type="project" value="TreeGrafter"/>
</dbReference>
<dbReference type="GO" id="GO:0030060">
    <property type="term" value="F:L-malate dehydrogenase (NAD+) activity"/>
    <property type="evidence" value="ECO:0007669"/>
    <property type="project" value="UniProtKB-UniRule"/>
</dbReference>
<dbReference type="GO" id="GO:0006089">
    <property type="term" value="P:lactate metabolic process"/>
    <property type="evidence" value="ECO:0007669"/>
    <property type="project" value="TreeGrafter"/>
</dbReference>
<dbReference type="GO" id="GO:0006099">
    <property type="term" value="P:tricarboxylic acid cycle"/>
    <property type="evidence" value="ECO:0007669"/>
    <property type="project" value="UniProtKB-UniRule"/>
</dbReference>
<dbReference type="CDD" id="cd01339">
    <property type="entry name" value="LDH-like_MDH"/>
    <property type="match status" value="1"/>
</dbReference>
<dbReference type="FunFam" id="3.40.50.720:FF:000018">
    <property type="entry name" value="Malate dehydrogenase"/>
    <property type="match status" value="1"/>
</dbReference>
<dbReference type="FunFam" id="3.90.110.10:FF:000004">
    <property type="entry name" value="Malate dehydrogenase"/>
    <property type="match status" value="1"/>
</dbReference>
<dbReference type="Gene3D" id="3.90.110.10">
    <property type="entry name" value="Lactate dehydrogenase/glycoside hydrolase, family 4, C-terminal"/>
    <property type="match status" value="1"/>
</dbReference>
<dbReference type="Gene3D" id="3.40.50.720">
    <property type="entry name" value="NAD(P)-binding Rossmann-like Domain"/>
    <property type="match status" value="1"/>
</dbReference>
<dbReference type="HAMAP" id="MF_00487">
    <property type="entry name" value="Malate_dehydrog_3"/>
    <property type="match status" value="1"/>
</dbReference>
<dbReference type="InterPro" id="IPR001557">
    <property type="entry name" value="L-lactate/malate_DH"/>
</dbReference>
<dbReference type="InterPro" id="IPR022383">
    <property type="entry name" value="Lactate/malate_DH_C"/>
</dbReference>
<dbReference type="InterPro" id="IPR001236">
    <property type="entry name" value="Lactate/malate_DH_N"/>
</dbReference>
<dbReference type="InterPro" id="IPR015955">
    <property type="entry name" value="Lactate_DH/Glyco_Ohase_4_C"/>
</dbReference>
<dbReference type="InterPro" id="IPR011275">
    <property type="entry name" value="Malate_DH_type3"/>
</dbReference>
<dbReference type="InterPro" id="IPR036291">
    <property type="entry name" value="NAD(P)-bd_dom_sf"/>
</dbReference>
<dbReference type="NCBIfam" id="TIGR01763">
    <property type="entry name" value="MalateDH_bact"/>
    <property type="match status" value="1"/>
</dbReference>
<dbReference type="NCBIfam" id="NF004863">
    <property type="entry name" value="PRK06223.1"/>
    <property type="match status" value="1"/>
</dbReference>
<dbReference type="PANTHER" id="PTHR43128">
    <property type="entry name" value="L-2-HYDROXYCARBOXYLATE DEHYDROGENASE (NAD(P)(+))"/>
    <property type="match status" value="1"/>
</dbReference>
<dbReference type="PANTHER" id="PTHR43128:SF16">
    <property type="entry name" value="L-LACTATE DEHYDROGENASE"/>
    <property type="match status" value="1"/>
</dbReference>
<dbReference type="Pfam" id="PF02866">
    <property type="entry name" value="Ldh_1_C"/>
    <property type="match status" value="1"/>
</dbReference>
<dbReference type="Pfam" id="PF00056">
    <property type="entry name" value="Ldh_1_N"/>
    <property type="match status" value="1"/>
</dbReference>
<dbReference type="PIRSF" id="PIRSF000102">
    <property type="entry name" value="Lac_mal_DH"/>
    <property type="match status" value="1"/>
</dbReference>
<dbReference type="PRINTS" id="PR00086">
    <property type="entry name" value="LLDHDRGNASE"/>
</dbReference>
<dbReference type="SUPFAM" id="SSF56327">
    <property type="entry name" value="LDH C-terminal domain-like"/>
    <property type="match status" value="1"/>
</dbReference>
<dbReference type="SUPFAM" id="SSF51735">
    <property type="entry name" value="NAD(P)-binding Rossmann-fold domains"/>
    <property type="match status" value="1"/>
</dbReference>
<name>MDH_FRAP2</name>
<gene>
    <name evidence="1" type="primary">mdh</name>
    <name type="ordered locus">Fphi_1620</name>
</gene>
<comment type="function">
    <text evidence="1">Catalyzes the reversible oxidation of malate to oxaloacetate.</text>
</comment>
<comment type="catalytic activity">
    <reaction evidence="1">
        <text>(S)-malate + NAD(+) = oxaloacetate + NADH + H(+)</text>
        <dbReference type="Rhea" id="RHEA:21432"/>
        <dbReference type="ChEBI" id="CHEBI:15378"/>
        <dbReference type="ChEBI" id="CHEBI:15589"/>
        <dbReference type="ChEBI" id="CHEBI:16452"/>
        <dbReference type="ChEBI" id="CHEBI:57540"/>
        <dbReference type="ChEBI" id="CHEBI:57945"/>
        <dbReference type="EC" id="1.1.1.37"/>
    </reaction>
</comment>
<comment type="similarity">
    <text evidence="1">Belongs to the LDH/MDH superfamily. MDH type 3 family.</text>
</comment>